<proteinExistence type="inferred from homology"/>
<accession>Q6DB52</accession>
<comment type="subcellular location">
    <subcellularLocation>
        <location evidence="1">Cell inner membrane</location>
        <topology evidence="1">Multi-pass membrane protein</topology>
    </subcellularLocation>
</comment>
<comment type="similarity">
    <text evidence="1">Belongs to the universal stress protein B family.</text>
</comment>
<dbReference type="EMBL" id="BX950851">
    <property type="protein sequence ID" value="CAG72970.1"/>
    <property type="molecule type" value="Genomic_DNA"/>
</dbReference>
<dbReference type="RefSeq" id="WP_011091694.1">
    <property type="nucleotide sequence ID" value="NC_004547.2"/>
</dbReference>
<dbReference type="STRING" id="218491.ECA0049"/>
<dbReference type="GeneID" id="57206904"/>
<dbReference type="KEGG" id="eca:ECA0049"/>
<dbReference type="PATRIC" id="fig|218491.5.peg.52"/>
<dbReference type="eggNOG" id="ENOG502ZP3V">
    <property type="taxonomic scope" value="Bacteria"/>
</dbReference>
<dbReference type="HOGENOM" id="CLU_151816_0_0_6"/>
<dbReference type="OrthoDB" id="6432605at2"/>
<dbReference type="Proteomes" id="UP000007966">
    <property type="component" value="Chromosome"/>
</dbReference>
<dbReference type="GO" id="GO:0005886">
    <property type="term" value="C:plasma membrane"/>
    <property type="evidence" value="ECO:0007669"/>
    <property type="project" value="UniProtKB-SubCell"/>
</dbReference>
<dbReference type="HAMAP" id="MF_01088">
    <property type="entry name" value="UspB"/>
    <property type="match status" value="1"/>
</dbReference>
<dbReference type="InterPro" id="IPR019598">
    <property type="entry name" value="Universal_stress_protein_B"/>
</dbReference>
<dbReference type="NCBIfam" id="NF003435">
    <property type="entry name" value="PRK04960.1"/>
    <property type="match status" value="1"/>
</dbReference>
<dbReference type="Pfam" id="PF10625">
    <property type="entry name" value="UspB"/>
    <property type="match status" value="1"/>
</dbReference>
<feature type="chain" id="PRO_0000212043" description="Universal stress protein B">
    <location>
        <begin position="1"/>
        <end position="111"/>
    </location>
</feature>
<feature type="transmembrane region" description="Helical" evidence="1">
    <location>
        <begin position="1"/>
        <end position="21"/>
    </location>
</feature>
<feature type="transmembrane region" description="Helical" evidence="1">
    <location>
        <begin position="90"/>
        <end position="110"/>
    </location>
</feature>
<evidence type="ECO:0000255" key="1">
    <source>
        <dbReference type="HAMAP-Rule" id="MF_01088"/>
    </source>
</evidence>
<gene>
    <name evidence="1" type="primary">uspB</name>
    <name type="ordered locus">ECA0049</name>
</gene>
<keyword id="KW-0997">Cell inner membrane</keyword>
<keyword id="KW-1003">Cell membrane</keyword>
<keyword id="KW-0472">Membrane</keyword>
<keyword id="KW-1185">Reference proteome</keyword>
<keyword id="KW-0812">Transmembrane</keyword>
<keyword id="KW-1133">Transmembrane helix</keyword>
<name>USPB_PECAS</name>
<reference key="1">
    <citation type="journal article" date="2004" name="Proc. Natl. Acad. Sci. U.S.A.">
        <title>Genome sequence of the enterobacterial phytopathogen Erwinia carotovora subsp. atroseptica and characterization of virulence factors.</title>
        <authorList>
            <person name="Bell K.S."/>
            <person name="Sebaihia M."/>
            <person name="Pritchard L."/>
            <person name="Holden M.T.G."/>
            <person name="Hyman L.J."/>
            <person name="Holeva M.C."/>
            <person name="Thomson N.R."/>
            <person name="Bentley S.D."/>
            <person name="Churcher L.J.C."/>
            <person name="Mungall K."/>
            <person name="Atkin R."/>
            <person name="Bason N."/>
            <person name="Brooks K."/>
            <person name="Chillingworth T."/>
            <person name="Clark K."/>
            <person name="Doggett J."/>
            <person name="Fraser A."/>
            <person name="Hance Z."/>
            <person name="Hauser H."/>
            <person name="Jagels K."/>
            <person name="Moule S."/>
            <person name="Norbertczak H."/>
            <person name="Ormond D."/>
            <person name="Price C."/>
            <person name="Quail M.A."/>
            <person name="Sanders M."/>
            <person name="Walker D."/>
            <person name="Whitehead S."/>
            <person name="Salmond G.P.C."/>
            <person name="Birch P.R.J."/>
            <person name="Parkhill J."/>
            <person name="Toth I.K."/>
        </authorList>
    </citation>
    <scope>NUCLEOTIDE SEQUENCE [LARGE SCALE GENOMIC DNA]</scope>
    <source>
        <strain>SCRI 1043 / ATCC BAA-672</strain>
    </source>
</reference>
<protein>
    <recommendedName>
        <fullName evidence="1">Universal stress protein B</fullName>
    </recommendedName>
</protein>
<organism>
    <name type="scientific">Pectobacterium atrosepticum (strain SCRI 1043 / ATCC BAA-672)</name>
    <name type="common">Erwinia carotovora subsp. atroseptica</name>
    <dbReference type="NCBI Taxonomy" id="218491"/>
    <lineage>
        <taxon>Bacteria</taxon>
        <taxon>Pseudomonadati</taxon>
        <taxon>Pseudomonadota</taxon>
        <taxon>Gammaproteobacteria</taxon>
        <taxon>Enterobacterales</taxon>
        <taxon>Pectobacteriaceae</taxon>
        <taxon>Pectobacterium</taxon>
    </lineage>
</organism>
<sequence length="111" mass="12996">MISTFALFWALCIVCIINMARYYSSLRVLLMILRDCDPLLYQYVDGGGFFTSHGQPSKQIRLVGYIYAQRYLDHHDPEFIRRCERVRGQFLLTTALCGLIVISLIAMMMWY</sequence>